<sequence>MIASVRGEVIDIALDHAVIEAAGVGYKVMATPSTLATLRRGTESRLVTAMIVREDSMTLYGFADADARDLFGTLLGVSGVGPKIALATLAVYDAPTLRQALADGDVTALTRVPGIGKRGAERMVLELRDKIGPVTTGAGVTAVGGHAVRGPVVEALVGLGFAAKQAEEACDKVLAADPDATTSSALRAALSMLGKK</sequence>
<dbReference type="EMBL" id="CP000518">
    <property type="protein sequence ID" value="ABL91511.1"/>
    <property type="molecule type" value="Genomic_DNA"/>
</dbReference>
<dbReference type="SMR" id="A1UFA3"/>
<dbReference type="STRING" id="189918.Mkms_2313"/>
<dbReference type="KEGG" id="mkm:Mkms_2313"/>
<dbReference type="HOGENOM" id="CLU_087936_2_1_11"/>
<dbReference type="OrthoDB" id="5293449at2"/>
<dbReference type="GO" id="GO:0005737">
    <property type="term" value="C:cytoplasm"/>
    <property type="evidence" value="ECO:0007669"/>
    <property type="project" value="UniProtKB-SubCell"/>
</dbReference>
<dbReference type="GO" id="GO:0009379">
    <property type="term" value="C:Holliday junction helicase complex"/>
    <property type="evidence" value="ECO:0007669"/>
    <property type="project" value="InterPro"/>
</dbReference>
<dbReference type="GO" id="GO:0048476">
    <property type="term" value="C:Holliday junction resolvase complex"/>
    <property type="evidence" value="ECO:0007669"/>
    <property type="project" value="UniProtKB-UniRule"/>
</dbReference>
<dbReference type="GO" id="GO:0005524">
    <property type="term" value="F:ATP binding"/>
    <property type="evidence" value="ECO:0007669"/>
    <property type="project" value="InterPro"/>
</dbReference>
<dbReference type="GO" id="GO:0000400">
    <property type="term" value="F:four-way junction DNA binding"/>
    <property type="evidence" value="ECO:0007669"/>
    <property type="project" value="UniProtKB-UniRule"/>
</dbReference>
<dbReference type="GO" id="GO:0009378">
    <property type="term" value="F:four-way junction helicase activity"/>
    <property type="evidence" value="ECO:0007669"/>
    <property type="project" value="InterPro"/>
</dbReference>
<dbReference type="GO" id="GO:0006310">
    <property type="term" value="P:DNA recombination"/>
    <property type="evidence" value="ECO:0007669"/>
    <property type="project" value="UniProtKB-UniRule"/>
</dbReference>
<dbReference type="GO" id="GO:0006281">
    <property type="term" value="P:DNA repair"/>
    <property type="evidence" value="ECO:0007669"/>
    <property type="project" value="UniProtKB-UniRule"/>
</dbReference>
<dbReference type="CDD" id="cd14332">
    <property type="entry name" value="UBA_RuvA_C"/>
    <property type="match status" value="1"/>
</dbReference>
<dbReference type="FunFam" id="2.40.50.140:FF:000083">
    <property type="entry name" value="Holliday junction ATP-dependent DNA helicase RuvA"/>
    <property type="match status" value="1"/>
</dbReference>
<dbReference type="Gene3D" id="1.10.150.20">
    <property type="entry name" value="5' to 3' exonuclease, C-terminal subdomain"/>
    <property type="match status" value="1"/>
</dbReference>
<dbReference type="Gene3D" id="1.10.8.10">
    <property type="entry name" value="DNA helicase RuvA subunit, C-terminal domain"/>
    <property type="match status" value="1"/>
</dbReference>
<dbReference type="Gene3D" id="2.40.50.140">
    <property type="entry name" value="Nucleic acid-binding proteins"/>
    <property type="match status" value="1"/>
</dbReference>
<dbReference type="HAMAP" id="MF_00031">
    <property type="entry name" value="DNA_HJ_migration_RuvA"/>
    <property type="match status" value="1"/>
</dbReference>
<dbReference type="InterPro" id="IPR013849">
    <property type="entry name" value="DNA_helicase_Holl-junc_RuvA_I"/>
</dbReference>
<dbReference type="InterPro" id="IPR003583">
    <property type="entry name" value="Hlx-hairpin-Hlx_DNA-bd_motif"/>
</dbReference>
<dbReference type="InterPro" id="IPR012340">
    <property type="entry name" value="NA-bd_OB-fold"/>
</dbReference>
<dbReference type="InterPro" id="IPR000085">
    <property type="entry name" value="RuvA"/>
</dbReference>
<dbReference type="InterPro" id="IPR010994">
    <property type="entry name" value="RuvA_2-like"/>
</dbReference>
<dbReference type="InterPro" id="IPR011114">
    <property type="entry name" value="RuvA_C"/>
</dbReference>
<dbReference type="InterPro" id="IPR036267">
    <property type="entry name" value="RuvA_C_sf"/>
</dbReference>
<dbReference type="NCBIfam" id="TIGR00084">
    <property type="entry name" value="ruvA"/>
    <property type="match status" value="1"/>
</dbReference>
<dbReference type="Pfam" id="PF14520">
    <property type="entry name" value="HHH_5"/>
    <property type="match status" value="1"/>
</dbReference>
<dbReference type="Pfam" id="PF07499">
    <property type="entry name" value="RuvA_C"/>
    <property type="match status" value="1"/>
</dbReference>
<dbReference type="Pfam" id="PF01330">
    <property type="entry name" value="RuvA_N"/>
    <property type="match status" value="1"/>
</dbReference>
<dbReference type="SMART" id="SM00278">
    <property type="entry name" value="HhH1"/>
    <property type="match status" value="2"/>
</dbReference>
<dbReference type="SUPFAM" id="SSF46929">
    <property type="entry name" value="DNA helicase RuvA subunit, C-terminal domain"/>
    <property type="match status" value="1"/>
</dbReference>
<dbReference type="SUPFAM" id="SSF50249">
    <property type="entry name" value="Nucleic acid-binding proteins"/>
    <property type="match status" value="1"/>
</dbReference>
<dbReference type="SUPFAM" id="SSF47781">
    <property type="entry name" value="RuvA domain 2-like"/>
    <property type="match status" value="1"/>
</dbReference>
<name>RUVA_MYCSK</name>
<feature type="chain" id="PRO_1000002491" description="Holliday junction branch migration complex subunit RuvA">
    <location>
        <begin position="1"/>
        <end position="196"/>
    </location>
</feature>
<feature type="region of interest" description="Domain I" evidence="1">
    <location>
        <begin position="1"/>
        <end position="63"/>
    </location>
</feature>
<feature type="region of interest" description="Domain II" evidence="1">
    <location>
        <begin position="64"/>
        <end position="142"/>
    </location>
</feature>
<feature type="region of interest" description="Flexible linker" evidence="1">
    <location>
        <begin position="143"/>
        <end position="151"/>
    </location>
</feature>
<feature type="region of interest" description="Domain III" evidence="1">
    <location>
        <begin position="151"/>
        <end position="196"/>
    </location>
</feature>
<keyword id="KW-0963">Cytoplasm</keyword>
<keyword id="KW-0227">DNA damage</keyword>
<keyword id="KW-0233">DNA recombination</keyword>
<keyword id="KW-0234">DNA repair</keyword>
<keyword id="KW-0238">DNA-binding</keyword>
<proteinExistence type="inferred from homology"/>
<reference key="1">
    <citation type="submission" date="2006-12" db="EMBL/GenBank/DDBJ databases">
        <title>Complete sequence of chromosome of Mycobacterium sp. KMS.</title>
        <authorList>
            <consortium name="US DOE Joint Genome Institute"/>
            <person name="Copeland A."/>
            <person name="Lucas S."/>
            <person name="Lapidus A."/>
            <person name="Barry K."/>
            <person name="Detter J.C."/>
            <person name="Glavina del Rio T."/>
            <person name="Hammon N."/>
            <person name="Israni S."/>
            <person name="Dalin E."/>
            <person name="Tice H."/>
            <person name="Pitluck S."/>
            <person name="Kiss H."/>
            <person name="Brettin T."/>
            <person name="Bruce D."/>
            <person name="Han C."/>
            <person name="Tapia R."/>
            <person name="Gilna P."/>
            <person name="Schmutz J."/>
            <person name="Larimer F."/>
            <person name="Land M."/>
            <person name="Hauser L."/>
            <person name="Kyrpides N."/>
            <person name="Mikhailova N."/>
            <person name="Miller C.D."/>
            <person name="Richardson P."/>
        </authorList>
    </citation>
    <scope>NUCLEOTIDE SEQUENCE [LARGE SCALE GENOMIC DNA]</scope>
    <source>
        <strain>KMS</strain>
    </source>
</reference>
<accession>A1UFA3</accession>
<evidence type="ECO:0000255" key="1">
    <source>
        <dbReference type="HAMAP-Rule" id="MF_00031"/>
    </source>
</evidence>
<gene>
    <name evidence="1" type="primary">ruvA</name>
    <name type="ordered locus">Mkms_2313</name>
</gene>
<comment type="function">
    <text evidence="1">The RuvA-RuvB-RuvC complex processes Holliday junction (HJ) DNA during genetic recombination and DNA repair, while the RuvA-RuvB complex plays an important role in the rescue of blocked DNA replication forks via replication fork reversal (RFR). RuvA specifically binds to HJ cruciform DNA, conferring on it an open structure. The RuvB hexamer acts as an ATP-dependent pump, pulling dsDNA into and through the RuvAB complex. HJ branch migration allows RuvC to scan DNA until it finds its consensus sequence, where it cleaves and resolves the cruciform DNA.</text>
</comment>
<comment type="subunit">
    <text evidence="1">Homotetramer. Forms an RuvA(8)-RuvB(12)-Holliday junction (HJ) complex. HJ DNA is sandwiched between 2 RuvA tetramers; dsDNA enters through RuvA and exits via RuvB. An RuvB hexamer assembles on each DNA strand where it exits the tetramer. Each RuvB hexamer is contacted by two RuvA subunits (via domain III) on 2 adjacent RuvB subunits; this complex drives branch migration. In the full resolvosome a probable DNA-RuvA(4)-RuvB(12)-RuvC(2) complex forms which resolves the HJ.</text>
</comment>
<comment type="subcellular location">
    <subcellularLocation>
        <location evidence="1">Cytoplasm</location>
    </subcellularLocation>
</comment>
<comment type="domain">
    <text evidence="1">Has three domains with a flexible linker between the domains II and III and assumes an 'L' shape. Domain III is highly mobile and contacts RuvB.</text>
</comment>
<comment type="similarity">
    <text evidence="1">Belongs to the RuvA family.</text>
</comment>
<protein>
    <recommendedName>
        <fullName evidence="1">Holliday junction branch migration complex subunit RuvA</fullName>
    </recommendedName>
</protein>
<organism>
    <name type="scientific">Mycobacterium sp. (strain KMS)</name>
    <dbReference type="NCBI Taxonomy" id="189918"/>
    <lineage>
        <taxon>Bacteria</taxon>
        <taxon>Bacillati</taxon>
        <taxon>Actinomycetota</taxon>
        <taxon>Actinomycetes</taxon>
        <taxon>Mycobacteriales</taxon>
        <taxon>Mycobacteriaceae</taxon>
        <taxon>Mycobacterium</taxon>
    </lineage>
</organism>